<reference key="1">
    <citation type="journal article" date="1994" name="Plant Mol. Biol.">
        <title>Isolation of chalcone synthase and chalcone isomerase cDNAs from alfalfa (Medicago sativa L.): highest transcript levels occur in young roots and root tips.</title>
        <authorList>
            <person name="McKhann H.I."/>
            <person name="Hirsch A.M."/>
        </authorList>
    </citation>
    <scope>NUCLEOTIDE SEQUENCE [MRNA]</scope>
    <source>
        <strain>cv. Iroquois</strain>
        <tissue>Root</tissue>
    </source>
</reference>
<reference key="2">
    <citation type="journal article" date="1993" name="Plant Mol. Biol.">
        <title>Stress responses in alfalfa (Medicago sativa L.). 15. Characterization and expression patterns of members of a subset of the chalcone synthase multigene family.</title>
        <authorList>
            <person name="Junghans H."/>
            <person name="Dalkin K."/>
            <person name="Dixon R.A."/>
        </authorList>
    </citation>
    <scope>NUCLEOTIDE SEQUENCE [MRNA] OF 7-389</scope>
</reference>
<feature type="chain" id="PRO_0000216009" description="Chalcone synthase 4">
    <location>
        <begin position="1"/>
        <end position="389"/>
    </location>
</feature>
<feature type="active site" evidence="1">
    <location>
        <position position="164"/>
    </location>
</feature>
<sequence>MVSVSEIRKAQRAEGPATILAIGTANPANCVEQSTYPDFYFKITNSEHKTELKEKFQRMCDKSMIKRRYMYLTEEILKENPSVCEYMAPSLDARQDMVVVEVPRLGKEAAVKAIKEWGQPKSKITHLIVCTTSGVDMPGADYQLTKLLGLRPYVKRYMMYQQGCFAGGTVLRLAKDLAENNKGARVLVVCSEVTAVTFRGPSDTHLDSLVGQALFGDGAAALIVGSDPVPEIEKPIFEMVWTAQTIAPDSEGAIDGHLREAGLTFHLLKDVPGIVSKNIDKALVEAFQPLGISDYNSIFWIAHPGGPAILDQVEQKLALKPEKMRATREVLSEYGNMSSACVLFILDEMRKKSTQDGLKTTGEGLEWGVLFGFGPGLTIETVVLRSVAI</sequence>
<name>CHS4_MEDSA</name>
<evidence type="ECO:0000255" key="1">
    <source>
        <dbReference type="PROSITE-ProRule" id="PRU10023"/>
    </source>
</evidence>
<evidence type="ECO:0000305" key="2"/>
<protein>
    <recommendedName>
        <fullName>Chalcone synthase 4</fullName>
        <ecNumber>2.3.1.74</ecNumber>
    </recommendedName>
    <alternativeName>
        <fullName>CHS12-1</fullName>
    </alternativeName>
    <alternativeName>
        <fullName>Naringenin-chalcone synthase 4</fullName>
    </alternativeName>
</protein>
<organism>
    <name type="scientific">Medicago sativa</name>
    <name type="common">Alfalfa</name>
    <dbReference type="NCBI Taxonomy" id="3879"/>
    <lineage>
        <taxon>Eukaryota</taxon>
        <taxon>Viridiplantae</taxon>
        <taxon>Streptophyta</taxon>
        <taxon>Embryophyta</taxon>
        <taxon>Tracheophyta</taxon>
        <taxon>Spermatophyta</taxon>
        <taxon>Magnoliopsida</taxon>
        <taxon>eudicotyledons</taxon>
        <taxon>Gunneridae</taxon>
        <taxon>Pentapetalae</taxon>
        <taxon>rosids</taxon>
        <taxon>fabids</taxon>
        <taxon>Fabales</taxon>
        <taxon>Fabaceae</taxon>
        <taxon>Papilionoideae</taxon>
        <taxon>50 kb inversion clade</taxon>
        <taxon>NPAAA clade</taxon>
        <taxon>Hologalegina</taxon>
        <taxon>IRL clade</taxon>
        <taxon>Trifolieae</taxon>
        <taxon>Medicago</taxon>
    </lineage>
</organism>
<comment type="function">
    <text>The primary product of this enzyme is 4,2',4',6'-tetrahydroxychalcone (also termed naringenin-chalcone or chalcone) which can under specific conditions spontaneously isomerize into naringenin.</text>
</comment>
<comment type="catalytic activity">
    <reaction evidence="1">
        <text>(E)-4-coumaroyl-CoA + 3 malonyl-CoA + 3 H(+) = 2',4,4',6'-tetrahydroxychalcone + 3 CO2 + 4 CoA</text>
        <dbReference type="Rhea" id="RHEA:11128"/>
        <dbReference type="ChEBI" id="CHEBI:15378"/>
        <dbReference type="ChEBI" id="CHEBI:15413"/>
        <dbReference type="ChEBI" id="CHEBI:16526"/>
        <dbReference type="ChEBI" id="CHEBI:57287"/>
        <dbReference type="ChEBI" id="CHEBI:57384"/>
        <dbReference type="ChEBI" id="CHEBI:85008"/>
        <dbReference type="EC" id="2.3.1.74"/>
    </reaction>
</comment>
<comment type="pathway">
    <text>Secondary metabolite biosynthesis; flavonoid biosynthesis.</text>
</comment>
<comment type="developmental stage">
    <text>Highest expression in young root tips.</text>
</comment>
<comment type="similarity">
    <text evidence="2">Belongs to the thiolase-like superfamily. Chalcone/stilbene synthases family.</text>
</comment>
<comment type="sequence caution" evidence="2">
    <conflict type="erroneous initiation">
        <sequence resource="EMBL-CDS" id="AAA02825"/>
    </conflict>
</comment>
<gene>
    <name type="primary">CHS4</name>
</gene>
<accession>P30075</accession>
<keyword id="KW-0012">Acyltransferase</keyword>
<keyword id="KW-0284">Flavonoid biosynthesis</keyword>
<keyword id="KW-0808">Transferase</keyword>
<dbReference type="EC" id="2.3.1.74"/>
<dbReference type="EMBL" id="U01021">
    <property type="protein sequence ID" value="AAB41559.1"/>
    <property type="molecule type" value="mRNA"/>
</dbReference>
<dbReference type="EMBL" id="L02903">
    <property type="protein sequence ID" value="AAA02825.1"/>
    <property type="status" value="ALT_INIT"/>
    <property type="molecule type" value="mRNA"/>
</dbReference>
<dbReference type="PIR" id="S35165">
    <property type="entry name" value="S35165"/>
</dbReference>
<dbReference type="PIR" id="S44370">
    <property type="entry name" value="S44370"/>
</dbReference>
<dbReference type="SMR" id="P30075"/>
<dbReference type="UniPathway" id="UPA00154"/>
<dbReference type="GO" id="GO:0016210">
    <property type="term" value="F:naringenin-chalcone synthase activity"/>
    <property type="evidence" value="ECO:0007669"/>
    <property type="project" value="UniProtKB-EC"/>
</dbReference>
<dbReference type="GO" id="GO:0009813">
    <property type="term" value="P:flavonoid biosynthetic process"/>
    <property type="evidence" value="ECO:0007669"/>
    <property type="project" value="UniProtKB-UniPathway"/>
</dbReference>
<dbReference type="GO" id="GO:0030639">
    <property type="term" value="P:polyketide biosynthetic process"/>
    <property type="evidence" value="ECO:0007669"/>
    <property type="project" value="TreeGrafter"/>
</dbReference>
<dbReference type="CDD" id="cd00831">
    <property type="entry name" value="CHS_like"/>
    <property type="match status" value="1"/>
</dbReference>
<dbReference type="FunFam" id="3.40.47.10:FF:000014">
    <property type="entry name" value="Chalcone synthase 1"/>
    <property type="match status" value="1"/>
</dbReference>
<dbReference type="FunFam" id="3.40.47.10:FF:000025">
    <property type="entry name" value="Chalcone synthase 2"/>
    <property type="match status" value="1"/>
</dbReference>
<dbReference type="Gene3D" id="3.40.47.10">
    <property type="match status" value="2"/>
</dbReference>
<dbReference type="InterPro" id="IPR012328">
    <property type="entry name" value="Chalcone/stilbene_synt_C"/>
</dbReference>
<dbReference type="InterPro" id="IPR001099">
    <property type="entry name" value="Chalcone/stilbene_synt_N"/>
</dbReference>
<dbReference type="InterPro" id="IPR018088">
    <property type="entry name" value="Chalcone/stilbene_synthase_AS"/>
</dbReference>
<dbReference type="InterPro" id="IPR011141">
    <property type="entry name" value="Polyketide_synthase_type-III"/>
</dbReference>
<dbReference type="InterPro" id="IPR016039">
    <property type="entry name" value="Thiolase-like"/>
</dbReference>
<dbReference type="PANTHER" id="PTHR11877:SF62">
    <property type="entry name" value="CHALCONE SYNTHASE 7"/>
    <property type="match status" value="1"/>
</dbReference>
<dbReference type="PANTHER" id="PTHR11877">
    <property type="entry name" value="HYDROXYMETHYLGLUTARYL-COA SYNTHASE"/>
    <property type="match status" value="1"/>
</dbReference>
<dbReference type="Pfam" id="PF02797">
    <property type="entry name" value="Chal_sti_synt_C"/>
    <property type="match status" value="1"/>
</dbReference>
<dbReference type="Pfam" id="PF00195">
    <property type="entry name" value="Chal_sti_synt_N"/>
    <property type="match status" value="1"/>
</dbReference>
<dbReference type="PIRSF" id="PIRSF000451">
    <property type="entry name" value="PKS_III"/>
    <property type="match status" value="1"/>
</dbReference>
<dbReference type="SUPFAM" id="SSF53901">
    <property type="entry name" value="Thiolase-like"/>
    <property type="match status" value="2"/>
</dbReference>
<dbReference type="PROSITE" id="PS00441">
    <property type="entry name" value="CHALCONE_SYNTH"/>
    <property type="match status" value="1"/>
</dbReference>
<proteinExistence type="evidence at transcript level"/>